<protein>
    <recommendedName>
        <fullName evidence="1">Glutamate 5-kinase</fullName>
        <ecNumber evidence="1">2.7.2.11</ecNumber>
    </recommendedName>
    <alternativeName>
        <fullName evidence="1">Gamma-glutamyl kinase</fullName>
        <shortName evidence="1">GK</shortName>
    </alternativeName>
</protein>
<evidence type="ECO:0000255" key="1">
    <source>
        <dbReference type="HAMAP-Rule" id="MF_00456"/>
    </source>
</evidence>
<evidence type="ECO:0000305" key="2"/>
<dbReference type="EC" id="2.7.2.11" evidence="1"/>
<dbReference type="EMBL" id="BA000037">
    <property type="protein sequence ID" value="BAC93622.1"/>
    <property type="status" value="ALT_INIT"/>
    <property type="molecule type" value="Genomic_DNA"/>
</dbReference>
<dbReference type="RefSeq" id="WP_011149676.1">
    <property type="nucleotide sequence ID" value="NC_005139.1"/>
</dbReference>
<dbReference type="SMR" id="Q7MN59"/>
<dbReference type="STRING" id="672.VV93_v1c07970"/>
<dbReference type="KEGG" id="vvy:VV0858"/>
<dbReference type="PATRIC" id="fig|196600.6.peg.864"/>
<dbReference type="eggNOG" id="COG0263">
    <property type="taxonomic scope" value="Bacteria"/>
</dbReference>
<dbReference type="HOGENOM" id="CLU_025400_2_0_6"/>
<dbReference type="UniPathway" id="UPA00098">
    <property type="reaction ID" value="UER00359"/>
</dbReference>
<dbReference type="Proteomes" id="UP000002675">
    <property type="component" value="Chromosome I"/>
</dbReference>
<dbReference type="GO" id="GO:0005829">
    <property type="term" value="C:cytosol"/>
    <property type="evidence" value="ECO:0007669"/>
    <property type="project" value="TreeGrafter"/>
</dbReference>
<dbReference type="GO" id="GO:0005524">
    <property type="term" value="F:ATP binding"/>
    <property type="evidence" value="ECO:0007669"/>
    <property type="project" value="UniProtKB-KW"/>
</dbReference>
<dbReference type="GO" id="GO:0004349">
    <property type="term" value="F:glutamate 5-kinase activity"/>
    <property type="evidence" value="ECO:0007669"/>
    <property type="project" value="UniProtKB-UniRule"/>
</dbReference>
<dbReference type="GO" id="GO:0003723">
    <property type="term" value="F:RNA binding"/>
    <property type="evidence" value="ECO:0007669"/>
    <property type="project" value="InterPro"/>
</dbReference>
<dbReference type="GO" id="GO:0055129">
    <property type="term" value="P:L-proline biosynthetic process"/>
    <property type="evidence" value="ECO:0007669"/>
    <property type="project" value="UniProtKB-UniRule"/>
</dbReference>
<dbReference type="CDD" id="cd04242">
    <property type="entry name" value="AAK_G5K_ProB"/>
    <property type="match status" value="1"/>
</dbReference>
<dbReference type="CDD" id="cd21157">
    <property type="entry name" value="PUA_G5K"/>
    <property type="match status" value="1"/>
</dbReference>
<dbReference type="FunFam" id="2.30.130.10:FF:000003">
    <property type="entry name" value="Glutamate 5-kinase"/>
    <property type="match status" value="1"/>
</dbReference>
<dbReference type="FunFam" id="3.40.1160.10:FF:000006">
    <property type="entry name" value="Glutamate 5-kinase"/>
    <property type="match status" value="1"/>
</dbReference>
<dbReference type="Gene3D" id="3.40.1160.10">
    <property type="entry name" value="Acetylglutamate kinase-like"/>
    <property type="match status" value="2"/>
</dbReference>
<dbReference type="Gene3D" id="2.30.130.10">
    <property type="entry name" value="PUA domain"/>
    <property type="match status" value="1"/>
</dbReference>
<dbReference type="HAMAP" id="MF_00456">
    <property type="entry name" value="ProB"/>
    <property type="match status" value="1"/>
</dbReference>
<dbReference type="InterPro" id="IPR036393">
    <property type="entry name" value="AceGlu_kinase-like_sf"/>
</dbReference>
<dbReference type="InterPro" id="IPR001048">
    <property type="entry name" value="Asp/Glu/Uridylate_kinase"/>
</dbReference>
<dbReference type="InterPro" id="IPR041739">
    <property type="entry name" value="G5K_ProB"/>
</dbReference>
<dbReference type="InterPro" id="IPR001057">
    <property type="entry name" value="Glu/AcGlu_kinase"/>
</dbReference>
<dbReference type="InterPro" id="IPR011529">
    <property type="entry name" value="Glu_5kinase"/>
</dbReference>
<dbReference type="InterPro" id="IPR005715">
    <property type="entry name" value="Glu_5kinase/COase_Synthase"/>
</dbReference>
<dbReference type="InterPro" id="IPR019797">
    <property type="entry name" value="Glutamate_5-kinase_CS"/>
</dbReference>
<dbReference type="InterPro" id="IPR002478">
    <property type="entry name" value="PUA"/>
</dbReference>
<dbReference type="InterPro" id="IPR015947">
    <property type="entry name" value="PUA-like_sf"/>
</dbReference>
<dbReference type="InterPro" id="IPR036974">
    <property type="entry name" value="PUA_sf"/>
</dbReference>
<dbReference type="NCBIfam" id="TIGR01027">
    <property type="entry name" value="proB"/>
    <property type="match status" value="1"/>
</dbReference>
<dbReference type="PANTHER" id="PTHR43654">
    <property type="entry name" value="GLUTAMATE 5-KINASE"/>
    <property type="match status" value="1"/>
</dbReference>
<dbReference type="PANTHER" id="PTHR43654:SF1">
    <property type="entry name" value="ISOPENTENYL PHOSPHATE KINASE"/>
    <property type="match status" value="1"/>
</dbReference>
<dbReference type="Pfam" id="PF00696">
    <property type="entry name" value="AA_kinase"/>
    <property type="match status" value="1"/>
</dbReference>
<dbReference type="Pfam" id="PF01472">
    <property type="entry name" value="PUA"/>
    <property type="match status" value="1"/>
</dbReference>
<dbReference type="PIRSF" id="PIRSF000729">
    <property type="entry name" value="GK"/>
    <property type="match status" value="1"/>
</dbReference>
<dbReference type="PRINTS" id="PR00474">
    <property type="entry name" value="GLU5KINASE"/>
</dbReference>
<dbReference type="SMART" id="SM00359">
    <property type="entry name" value="PUA"/>
    <property type="match status" value="1"/>
</dbReference>
<dbReference type="SUPFAM" id="SSF53633">
    <property type="entry name" value="Carbamate kinase-like"/>
    <property type="match status" value="1"/>
</dbReference>
<dbReference type="SUPFAM" id="SSF88697">
    <property type="entry name" value="PUA domain-like"/>
    <property type="match status" value="1"/>
</dbReference>
<dbReference type="PROSITE" id="PS00902">
    <property type="entry name" value="GLUTAMATE_5_KINASE"/>
    <property type="match status" value="1"/>
</dbReference>
<dbReference type="PROSITE" id="PS50890">
    <property type="entry name" value="PUA"/>
    <property type="match status" value="1"/>
</dbReference>
<organism>
    <name type="scientific">Vibrio vulnificus (strain YJ016)</name>
    <dbReference type="NCBI Taxonomy" id="196600"/>
    <lineage>
        <taxon>Bacteria</taxon>
        <taxon>Pseudomonadati</taxon>
        <taxon>Pseudomonadota</taxon>
        <taxon>Gammaproteobacteria</taxon>
        <taxon>Vibrionales</taxon>
        <taxon>Vibrionaceae</taxon>
        <taxon>Vibrio</taxon>
    </lineage>
</organism>
<gene>
    <name evidence="1" type="primary">proB</name>
    <name type="ordered locus">VV0858</name>
</gene>
<feature type="chain" id="PRO_0000109755" description="Glutamate 5-kinase">
    <location>
        <begin position="1"/>
        <end position="379"/>
    </location>
</feature>
<feature type="domain" description="PUA" evidence="1">
    <location>
        <begin position="285"/>
        <end position="363"/>
    </location>
</feature>
<feature type="binding site" evidence="1">
    <location>
        <position position="19"/>
    </location>
    <ligand>
        <name>ATP</name>
        <dbReference type="ChEBI" id="CHEBI:30616"/>
    </ligand>
</feature>
<feature type="binding site" evidence="1">
    <location>
        <position position="59"/>
    </location>
    <ligand>
        <name>substrate</name>
    </ligand>
</feature>
<feature type="binding site" evidence="1">
    <location>
        <position position="146"/>
    </location>
    <ligand>
        <name>substrate</name>
    </ligand>
</feature>
<feature type="binding site" evidence="1">
    <location>
        <position position="158"/>
    </location>
    <ligand>
        <name>substrate</name>
    </ligand>
</feature>
<feature type="binding site" evidence="1">
    <location>
        <begin position="178"/>
        <end position="179"/>
    </location>
    <ligand>
        <name>ATP</name>
        <dbReference type="ChEBI" id="CHEBI:30616"/>
    </ligand>
</feature>
<feature type="binding site" evidence="1">
    <location>
        <begin position="220"/>
        <end position="226"/>
    </location>
    <ligand>
        <name>ATP</name>
        <dbReference type="ChEBI" id="CHEBI:30616"/>
    </ligand>
</feature>
<proteinExistence type="inferred from homology"/>
<sequence length="379" mass="40091">MTTNQQSVAASQPKTIVVKLGTSVLTGGTLALDRAHMVELARQCAELKKQGHSVVVVSSGAIAAGREHLGYPALPNAMASKQLLAAVGQSQLIQTWESLFALYGIKIGQMLLTRADLEDRERFLNARDTINALVDNGIIPVVNENDAVATSEIKVGDNDNLSALVGILCGADKLLLLTDQKGLYTADPRKDPNAELIKEVKVIDDTLRKIAGGSGTTLGTGGMATKLQAADIARRAGIEVIIAAGRGQNVIFDALSPAPQGTRFLPCEEALENRKRWILAGPAASGDIVIDQGAVKAVVEKGSSLLAKGVTKVLGEFSRGEVVRVTDAQGHLVARGIASYSNQDMAKIAGKHSKDIISILGYDYGSEVIHRDDMVVIQE</sequence>
<reference key="1">
    <citation type="journal article" date="2003" name="Genome Res.">
        <title>Comparative genome analysis of Vibrio vulnificus, a marine pathogen.</title>
        <authorList>
            <person name="Chen C.-Y."/>
            <person name="Wu K.-M."/>
            <person name="Chang Y.-C."/>
            <person name="Chang C.-H."/>
            <person name="Tsai H.-C."/>
            <person name="Liao T.-L."/>
            <person name="Liu Y.-M."/>
            <person name="Chen H.-J."/>
            <person name="Shen A.B.-T."/>
            <person name="Li J.-C."/>
            <person name="Su T.-L."/>
            <person name="Shao C.-P."/>
            <person name="Lee C.-T."/>
            <person name="Hor L.-I."/>
            <person name="Tsai S.-F."/>
        </authorList>
    </citation>
    <scope>NUCLEOTIDE SEQUENCE [LARGE SCALE GENOMIC DNA]</scope>
    <source>
        <strain>YJ016</strain>
    </source>
</reference>
<keyword id="KW-0028">Amino-acid biosynthesis</keyword>
<keyword id="KW-0067">ATP-binding</keyword>
<keyword id="KW-0963">Cytoplasm</keyword>
<keyword id="KW-0418">Kinase</keyword>
<keyword id="KW-0547">Nucleotide-binding</keyword>
<keyword id="KW-0641">Proline biosynthesis</keyword>
<keyword id="KW-0808">Transferase</keyword>
<comment type="function">
    <text evidence="1">Catalyzes the transfer of a phosphate group to glutamate to form L-glutamate 5-phosphate.</text>
</comment>
<comment type="catalytic activity">
    <reaction evidence="1">
        <text>L-glutamate + ATP = L-glutamyl 5-phosphate + ADP</text>
        <dbReference type="Rhea" id="RHEA:14877"/>
        <dbReference type="ChEBI" id="CHEBI:29985"/>
        <dbReference type="ChEBI" id="CHEBI:30616"/>
        <dbReference type="ChEBI" id="CHEBI:58274"/>
        <dbReference type="ChEBI" id="CHEBI:456216"/>
        <dbReference type="EC" id="2.7.2.11"/>
    </reaction>
</comment>
<comment type="pathway">
    <text evidence="1">Amino-acid biosynthesis; L-proline biosynthesis; L-glutamate 5-semialdehyde from L-glutamate: step 1/2.</text>
</comment>
<comment type="subcellular location">
    <subcellularLocation>
        <location evidence="1">Cytoplasm</location>
    </subcellularLocation>
</comment>
<comment type="similarity">
    <text evidence="1">Belongs to the glutamate 5-kinase family.</text>
</comment>
<comment type="sequence caution" evidence="2">
    <conflict type="erroneous initiation">
        <sequence resource="EMBL-CDS" id="BAC93622"/>
    </conflict>
</comment>
<name>PROB_VIBVY</name>
<accession>Q7MN59</accession>